<gene>
    <name evidence="1" type="primary">gpsA</name>
    <name type="ordered locus">MTH_368</name>
</gene>
<feature type="chain" id="PRO_0000138069" description="Glycerol-3-phosphate dehydrogenase [NAD(P)+]">
    <location>
        <begin position="1"/>
        <end position="321"/>
    </location>
</feature>
<feature type="active site" description="Proton acceptor" evidence="1">
    <location>
        <position position="186"/>
    </location>
</feature>
<feature type="binding site" evidence="1">
    <location>
        <position position="10"/>
    </location>
    <ligand>
        <name>NADPH</name>
        <dbReference type="ChEBI" id="CHEBI:57783"/>
    </ligand>
</feature>
<feature type="binding site" evidence="1">
    <location>
        <position position="11"/>
    </location>
    <ligand>
        <name>NADPH</name>
        <dbReference type="ChEBI" id="CHEBI:57783"/>
    </ligand>
</feature>
<feature type="binding site" evidence="1">
    <location>
        <position position="31"/>
    </location>
    <ligand>
        <name>NADPH</name>
        <dbReference type="ChEBI" id="CHEBI:57783"/>
    </ligand>
</feature>
<feature type="binding site" evidence="1">
    <location>
        <position position="32"/>
    </location>
    <ligand>
        <name>NADPH</name>
        <dbReference type="ChEBI" id="CHEBI:57783"/>
    </ligand>
</feature>
<feature type="binding site" evidence="1">
    <location>
        <position position="104"/>
    </location>
    <ligand>
        <name>NADPH</name>
        <dbReference type="ChEBI" id="CHEBI:57783"/>
    </ligand>
</feature>
<feature type="binding site" evidence="1">
    <location>
        <position position="104"/>
    </location>
    <ligand>
        <name>sn-glycerol 3-phosphate</name>
        <dbReference type="ChEBI" id="CHEBI:57597"/>
    </ligand>
</feature>
<feature type="binding site" evidence="1">
    <location>
        <position position="132"/>
    </location>
    <ligand>
        <name>sn-glycerol 3-phosphate</name>
        <dbReference type="ChEBI" id="CHEBI:57597"/>
    </ligand>
</feature>
<feature type="binding site" evidence="1">
    <location>
        <position position="136"/>
    </location>
    <ligand>
        <name>NADPH</name>
        <dbReference type="ChEBI" id="CHEBI:57783"/>
    </ligand>
</feature>
<feature type="binding site" evidence="1">
    <location>
        <position position="186"/>
    </location>
    <ligand>
        <name>sn-glycerol 3-phosphate</name>
        <dbReference type="ChEBI" id="CHEBI:57597"/>
    </ligand>
</feature>
<feature type="binding site" evidence="1">
    <location>
        <position position="238"/>
    </location>
    <ligand>
        <name>sn-glycerol 3-phosphate</name>
        <dbReference type="ChEBI" id="CHEBI:57597"/>
    </ligand>
</feature>
<feature type="binding site" evidence="1">
    <location>
        <position position="248"/>
    </location>
    <ligand>
        <name>sn-glycerol 3-phosphate</name>
        <dbReference type="ChEBI" id="CHEBI:57597"/>
    </ligand>
</feature>
<feature type="binding site" evidence="1">
    <location>
        <position position="249"/>
    </location>
    <ligand>
        <name>NADPH</name>
        <dbReference type="ChEBI" id="CHEBI:57783"/>
    </ligand>
</feature>
<feature type="binding site" evidence="1">
    <location>
        <position position="249"/>
    </location>
    <ligand>
        <name>sn-glycerol 3-phosphate</name>
        <dbReference type="ChEBI" id="CHEBI:57597"/>
    </ligand>
</feature>
<feature type="binding site" evidence="1">
    <location>
        <position position="250"/>
    </location>
    <ligand>
        <name>sn-glycerol 3-phosphate</name>
        <dbReference type="ChEBI" id="CHEBI:57597"/>
    </ligand>
</feature>
<feature type="binding site" evidence="1">
    <location>
        <position position="272"/>
    </location>
    <ligand>
        <name>NADPH</name>
        <dbReference type="ChEBI" id="CHEBI:57783"/>
    </ligand>
</feature>
<sequence>MMVTVIGAGSFGTAIAQVLSWNAEMVRLMARRSEVVENINRTRENSAYHPGVKLRDNIEATLMDGSVLEESEYVFMAVPSGNLRSIVRSMNSSLEDKKIVSCIKGIEHPGLKTMSSVIREETGSRTVFSISGPNFADELIRGMTSGITVGASTRYAREIAGLLKSPRIILDHSENVEGVEFCGILKNVYAVAMGILDGQITGENHRHSLLTLCFREMNLILNEMGYGELHDRFCGFGDFLLTSTTDKSRNRTLGLMLGKKMRLSEDSTITIESLRSIRAIRELTEGLELPVLEMVYQTMQEPENVNLYIREFQERISRPEF</sequence>
<keyword id="KW-0963">Cytoplasm</keyword>
<keyword id="KW-0520">NAD</keyword>
<keyword id="KW-0521">NADP</keyword>
<keyword id="KW-0547">Nucleotide-binding</keyword>
<keyword id="KW-0560">Oxidoreductase</keyword>
<keyword id="KW-1185">Reference proteome</keyword>
<proteinExistence type="inferred from homology"/>
<accession>O26468</accession>
<organism>
    <name type="scientific">Methanothermobacter thermautotrophicus (strain ATCC 29096 / DSM 1053 / JCM 10044 / NBRC 100330 / Delta H)</name>
    <name type="common">Methanobacterium thermoautotrophicum</name>
    <dbReference type="NCBI Taxonomy" id="187420"/>
    <lineage>
        <taxon>Archaea</taxon>
        <taxon>Methanobacteriati</taxon>
        <taxon>Methanobacteriota</taxon>
        <taxon>Methanomada group</taxon>
        <taxon>Methanobacteria</taxon>
        <taxon>Methanobacteriales</taxon>
        <taxon>Methanobacteriaceae</taxon>
        <taxon>Methanothermobacter</taxon>
    </lineage>
</organism>
<name>GPDA_METTH</name>
<reference key="1">
    <citation type="journal article" date="1997" name="J. Bacteriol.">
        <title>Complete genome sequence of Methanobacterium thermoautotrophicum deltaH: functional analysis and comparative genomics.</title>
        <authorList>
            <person name="Smith D.R."/>
            <person name="Doucette-Stamm L.A."/>
            <person name="Deloughery C."/>
            <person name="Lee H.-M."/>
            <person name="Dubois J."/>
            <person name="Aldredge T."/>
            <person name="Bashirzadeh R."/>
            <person name="Blakely D."/>
            <person name="Cook R."/>
            <person name="Gilbert K."/>
            <person name="Harrison D."/>
            <person name="Hoang L."/>
            <person name="Keagle P."/>
            <person name="Lumm W."/>
            <person name="Pothier B."/>
            <person name="Qiu D."/>
            <person name="Spadafora R."/>
            <person name="Vicare R."/>
            <person name="Wang Y."/>
            <person name="Wierzbowski J."/>
            <person name="Gibson R."/>
            <person name="Jiwani N."/>
            <person name="Caruso A."/>
            <person name="Bush D."/>
            <person name="Safer H."/>
            <person name="Patwell D."/>
            <person name="Prabhakar S."/>
            <person name="McDougall S."/>
            <person name="Shimer G."/>
            <person name="Goyal A."/>
            <person name="Pietrovski S."/>
            <person name="Church G.M."/>
            <person name="Daniels C.J."/>
            <person name="Mao J.-I."/>
            <person name="Rice P."/>
            <person name="Noelling J."/>
            <person name="Reeve J.N."/>
        </authorList>
    </citation>
    <scope>NUCLEOTIDE SEQUENCE [LARGE SCALE GENOMIC DNA]</scope>
    <source>
        <strain>ATCC 29096 / DSM 1053 / JCM 10044 / NBRC 100330 / Delta H</strain>
    </source>
</reference>
<comment type="function">
    <text evidence="1">Catalyzes the reduction of the glycolytic intermediate dihydroxyacetone phosphate (DHAP) to sn-glycerol 3-phosphate (G3P).</text>
</comment>
<comment type="catalytic activity">
    <reaction evidence="1">
        <text>sn-glycerol 3-phosphate + NAD(+) = dihydroxyacetone phosphate + NADH + H(+)</text>
        <dbReference type="Rhea" id="RHEA:11092"/>
        <dbReference type="ChEBI" id="CHEBI:15378"/>
        <dbReference type="ChEBI" id="CHEBI:57540"/>
        <dbReference type="ChEBI" id="CHEBI:57597"/>
        <dbReference type="ChEBI" id="CHEBI:57642"/>
        <dbReference type="ChEBI" id="CHEBI:57945"/>
        <dbReference type="EC" id="1.1.1.94"/>
    </reaction>
    <physiologicalReaction direction="right-to-left" evidence="1">
        <dbReference type="Rhea" id="RHEA:11094"/>
    </physiologicalReaction>
</comment>
<comment type="catalytic activity">
    <reaction evidence="1">
        <text>sn-glycerol 3-phosphate + NADP(+) = dihydroxyacetone phosphate + NADPH + H(+)</text>
        <dbReference type="Rhea" id="RHEA:11096"/>
        <dbReference type="ChEBI" id="CHEBI:15378"/>
        <dbReference type="ChEBI" id="CHEBI:57597"/>
        <dbReference type="ChEBI" id="CHEBI:57642"/>
        <dbReference type="ChEBI" id="CHEBI:57783"/>
        <dbReference type="ChEBI" id="CHEBI:58349"/>
        <dbReference type="EC" id="1.1.1.94"/>
    </reaction>
    <physiologicalReaction direction="right-to-left" evidence="1">
        <dbReference type="Rhea" id="RHEA:11098"/>
    </physiologicalReaction>
</comment>
<comment type="subcellular location">
    <subcellularLocation>
        <location evidence="1">Cytoplasm</location>
    </subcellularLocation>
</comment>
<comment type="miscellaneous">
    <text evidence="2">Glycerol-3-phosphate dehydrogenase (G3PDH) is generally absent in archaea, because archaea, unlike eukaryotes and eubacteria, utilize glycerol-1-phosphate instead of glycerol-3-phosphate for the biosynthesis of membrane lipids. Surprisingly, the genome of the thermophilic archaeon M.thermautotrophicus comprises a G3PDH ortholog, most likely due to horizontal gene transfer from a eubacterial organism.</text>
</comment>
<comment type="similarity">
    <text evidence="1">Belongs to the NAD-dependent glycerol-3-phosphate dehydrogenase family.</text>
</comment>
<evidence type="ECO:0000255" key="1">
    <source>
        <dbReference type="HAMAP-Rule" id="MF_00394"/>
    </source>
</evidence>
<evidence type="ECO:0000305" key="2"/>
<protein>
    <recommendedName>
        <fullName evidence="1">Glycerol-3-phosphate dehydrogenase [NAD(P)+]</fullName>
        <ecNumber evidence="1">1.1.1.94</ecNumber>
    </recommendedName>
    <alternativeName>
        <fullName evidence="1">NAD(P)(+)-dependent glycerol-3-phosphate dehydrogenase</fullName>
    </alternativeName>
    <alternativeName>
        <fullName evidence="1">NAD(P)H-dependent dihydroxyacetone-phosphate reductase</fullName>
    </alternativeName>
</protein>
<dbReference type="EC" id="1.1.1.94" evidence="1"/>
<dbReference type="EMBL" id="AE000666">
    <property type="protein sequence ID" value="AAB84874.1"/>
    <property type="molecule type" value="Genomic_DNA"/>
</dbReference>
<dbReference type="PIR" id="E69147">
    <property type="entry name" value="E69147"/>
</dbReference>
<dbReference type="RefSeq" id="WP_010876007.1">
    <property type="nucleotide sequence ID" value="NC_000916.1"/>
</dbReference>
<dbReference type="SMR" id="O26468"/>
<dbReference type="STRING" id="187420.MTH_368"/>
<dbReference type="PaxDb" id="187420-MTH_368"/>
<dbReference type="EnsemblBacteria" id="AAB84874">
    <property type="protein sequence ID" value="AAB84874"/>
    <property type="gene ID" value="MTH_368"/>
</dbReference>
<dbReference type="GeneID" id="1470329"/>
<dbReference type="KEGG" id="mth:MTH_368"/>
<dbReference type="PATRIC" id="fig|187420.15.peg.337"/>
<dbReference type="HOGENOM" id="CLU_033449_0_0_2"/>
<dbReference type="InParanoid" id="O26468"/>
<dbReference type="Proteomes" id="UP000005223">
    <property type="component" value="Chromosome"/>
</dbReference>
<dbReference type="GO" id="GO:0005829">
    <property type="term" value="C:cytosol"/>
    <property type="evidence" value="ECO:0007669"/>
    <property type="project" value="TreeGrafter"/>
</dbReference>
<dbReference type="GO" id="GO:0141153">
    <property type="term" value="F:glycerol-3-phosphate dehydrogenase (NADP+) activity"/>
    <property type="evidence" value="ECO:0007669"/>
    <property type="project" value="RHEA"/>
</dbReference>
<dbReference type="GO" id="GO:0051287">
    <property type="term" value="F:NAD binding"/>
    <property type="evidence" value="ECO:0007669"/>
    <property type="project" value="InterPro"/>
</dbReference>
<dbReference type="GO" id="GO:0005975">
    <property type="term" value="P:carbohydrate metabolic process"/>
    <property type="evidence" value="ECO:0007669"/>
    <property type="project" value="InterPro"/>
</dbReference>
<dbReference type="GO" id="GO:0046167">
    <property type="term" value="P:glycerol-3-phosphate biosynthetic process"/>
    <property type="evidence" value="ECO:0007669"/>
    <property type="project" value="UniProtKB-UniRule"/>
</dbReference>
<dbReference type="GO" id="GO:0046168">
    <property type="term" value="P:glycerol-3-phosphate catabolic process"/>
    <property type="evidence" value="ECO:0007669"/>
    <property type="project" value="InterPro"/>
</dbReference>
<dbReference type="GO" id="GO:0006650">
    <property type="term" value="P:glycerophospholipid metabolic process"/>
    <property type="evidence" value="ECO:0007669"/>
    <property type="project" value="UniProtKB-UniRule"/>
</dbReference>
<dbReference type="Gene3D" id="1.10.1040.10">
    <property type="entry name" value="N-(1-d-carboxylethyl)-l-norvaline Dehydrogenase, domain 2"/>
    <property type="match status" value="1"/>
</dbReference>
<dbReference type="Gene3D" id="3.40.50.720">
    <property type="entry name" value="NAD(P)-binding Rossmann-like Domain"/>
    <property type="match status" value="1"/>
</dbReference>
<dbReference type="HAMAP" id="MF_00394">
    <property type="entry name" value="NAD_Glyc3P_dehydrog"/>
    <property type="match status" value="1"/>
</dbReference>
<dbReference type="InterPro" id="IPR008927">
    <property type="entry name" value="6-PGluconate_DH-like_C_sf"/>
</dbReference>
<dbReference type="InterPro" id="IPR013328">
    <property type="entry name" value="6PGD_dom2"/>
</dbReference>
<dbReference type="InterPro" id="IPR006168">
    <property type="entry name" value="G3P_DH_NAD-dep"/>
</dbReference>
<dbReference type="InterPro" id="IPR006109">
    <property type="entry name" value="G3P_DH_NAD-dep_C"/>
</dbReference>
<dbReference type="InterPro" id="IPR011128">
    <property type="entry name" value="G3P_DH_NAD-dep_N"/>
</dbReference>
<dbReference type="InterPro" id="IPR036291">
    <property type="entry name" value="NAD(P)-bd_dom_sf"/>
</dbReference>
<dbReference type="PANTHER" id="PTHR11728">
    <property type="entry name" value="GLYCEROL-3-PHOSPHATE DEHYDROGENASE"/>
    <property type="match status" value="1"/>
</dbReference>
<dbReference type="PANTHER" id="PTHR11728:SF1">
    <property type="entry name" value="GLYCEROL-3-PHOSPHATE DEHYDROGENASE [NAD(+)] 2, CHLOROPLASTIC"/>
    <property type="match status" value="1"/>
</dbReference>
<dbReference type="Pfam" id="PF07479">
    <property type="entry name" value="NAD_Gly3P_dh_C"/>
    <property type="match status" value="1"/>
</dbReference>
<dbReference type="Pfam" id="PF01210">
    <property type="entry name" value="NAD_Gly3P_dh_N"/>
    <property type="match status" value="1"/>
</dbReference>
<dbReference type="PIRSF" id="PIRSF000114">
    <property type="entry name" value="Glycerol-3-P_dh"/>
    <property type="match status" value="1"/>
</dbReference>
<dbReference type="PRINTS" id="PR00077">
    <property type="entry name" value="GPDHDRGNASE"/>
</dbReference>
<dbReference type="SUPFAM" id="SSF48179">
    <property type="entry name" value="6-phosphogluconate dehydrogenase C-terminal domain-like"/>
    <property type="match status" value="1"/>
</dbReference>
<dbReference type="SUPFAM" id="SSF51735">
    <property type="entry name" value="NAD(P)-binding Rossmann-fold domains"/>
    <property type="match status" value="1"/>
</dbReference>
<dbReference type="PROSITE" id="PS00957">
    <property type="entry name" value="NAD_G3PDH"/>
    <property type="match status" value="1"/>
</dbReference>